<protein>
    <recommendedName>
        <fullName evidence="1">Photosystem II reaction center protein M</fullName>
        <shortName evidence="1">PSII-M</shortName>
    </recommendedName>
</protein>
<accession>Q31QD8</accession>
<proteinExistence type="inferred from homology"/>
<evidence type="ECO:0000255" key="1">
    <source>
        <dbReference type="HAMAP-Rule" id="MF_00438"/>
    </source>
</evidence>
<gene>
    <name evidence="1" type="primary">psbM</name>
    <name type="ordered locus">Synpcc7942_0699</name>
</gene>
<dbReference type="EMBL" id="CP000100">
    <property type="protein sequence ID" value="ABB56731.1"/>
    <property type="molecule type" value="Genomic_DNA"/>
</dbReference>
<dbReference type="RefSeq" id="WP_011243143.1">
    <property type="nucleotide sequence ID" value="NZ_JACJTX010000005.1"/>
</dbReference>
<dbReference type="SMR" id="Q31QD8"/>
<dbReference type="STRING" id="1140.Synpcc7942_0699"/>
<dbReference type="TCDB" id="3.E.2.2.1">
    <property type="family name" value="the photosynthetic reaction center (prc) family"/>
</dbReference>
<dbReference type="PaxDb" id="1140-Synpcc7942_0699"/>
<dbReference type="GeneID" id="72429533"/>
<dbReference type="KEGG" id="syf:Synpcc7942_0699"/>
<dbReference type="eggNOG" id="ENOG50339PB">
    <property type="taxonomic scope" value="Bacteria"/>
</dbReference>
<dbReference type="HOGENOM" id="CLU_215415_0_0_3"/>
<dbReference type="BioCyc" id="MetaCyc:SYNPCC7942_0699-MONOMER"/>
<dbReference type="BioCyc" id="SYNEL:SYNPCC7942_0699-MONOMER"/>
<dbReference type="Proteomes" id="UP000889800">
    <property type="component" value="Chromosome"/>
</dbReference>
<dbReference type="GO" id="GO:0009523">
    <property type="term" value="C:photosystem II"/>
    <property type="evidence" value="ECO:0007669"/>
    <property type="project" value="UniProtKB-KW"/>
</dbReference>
<dbReference type="GO" id="GO:0031676">
    <property type="term" value="C:plasma membrane-derived thylakoid membrane"/>
    <property type="evidence" value="ECO:0007669"/>
    <property type="project" value="UniProtKB-SubCell"/>
</dbReference>
<dbReference type="GO" id="GO:0019684">
    <property type="term" value="P:photosynthesis, light reaction"/>
    <property type="evidence" value="ECO:0007669"/>
    <property type="project" value="InterPro"/>
</dbReference>
<dbReference type="HAMAP" id="MF_00438">
    <property type="entry name" value="PSII_PsbM"/>
    <property type="match status" value="1"/>
</dbReference>
<dbReference type="InterPro" id="IPR007826">
    <property type="entry name" value="PSII_PsbM"/>
</dbReference>
<dbReference type="InterPro" id="IPR037269">
    <property type="entry name" value="PSII_PsbM_sf"/>
</dbReference>
<dbReference type="NCBIfam" id="TIGR03038">
    <property type="entry name" value="PS_II_psbM"/>
    <property type="match status" value="1"/>
</dbReference>
<dbReference type="Pfam" id="PF05151">
    <property type="entry name" value="PsbM"/>
    <property type="match status" value="1"/>
</dbReference>
<dbReference type="SUPFAM" id="SSF161033">
    <property type="entry name" value="Photosystem II reaction center protein M, PsbM"/>
    <property type="match status" value="1"/>
</dbReference>
<comment type="function">
    <text evidence="1">One of the components of the core complex of photosystem II (PSII). PSII is a light-driven water:plastoquinone oxidoreductase that uses light energy to abstract electrons from H(2)O, generating O(2) and a proton gradient subsequently used for ATP formation. It consists of a core antenna complex that captures photons, and an electron transfer chain that converts photonic excitation into a charge separation. This subunit is found at the monomer-monomer interface.</text>
</comment>
<comment type="subunit">
    <text evidence="1">PSII is composed of 1 copy each of membrane proteins PsbA, PsbB, PsbC, PsbD, PsbE, PsbF, PsbH, PsbI, PsbJ, PsbK, PsbL, PsbM, PsbT, PsbX, PsbY, PsbZ, Psb30/Ycf12, peripheral proteins PsbO, CyanoQ (PsbQ), PsbU, PsbV and a large number of cofactors. It forms dimeric complexes.</text>
</comment>
<comment type="subcellular location">
    <subcellularLocation>
        <location evidence="1">Cellular thylakoid membrane</location>
        <topology evidence="1">Single-pass membrane protein</topology>
    </subcellularLocation>
</comment>
<comment type="similarity">
    <text evidence="1">Belongs to the PsbM family.</text>
</comment>
<sequence>MQVNELGFLASLLFVLVPSVFLIVLYIQTASREAK</sequence>
<reference key="1">
    <citation type="submission" date="2005-08" db="EMBL/GenBank/DDBJ databases">
        <title>Complete sequence of chromosome 1 of Synechococcus elongatus PCC 7942.</title>
        <authorList>
            <consortium name="US DOE Joint Genome Institute"/>
            <person name="Copeland A."/>
            <person name="Lucas S."/>
            <person name="Lapidus A."/>
            <person name="Barry K."/>
            <person name="Detter J.C."/>
            <person name="Glavina T."/>
            <person name="Hammon N."/>
            <person name="Israni S."/>
            <person name="Pitluck S."/>
            <person name="Schmutz J."/>
            <person name="Larimer F."/>
            <person name="Land M."/>
            <person name="Kyrpides N."/>
            <person name="Lykidis A."/>
            <person name="Golden S."/>
            <person name="Richardson P."/>
        </authorList>
    </citation>
    <scope>NUCLEOTIDE SEQUENCE [LARGE SCALE GENOMIC DNA]</scope>
    <source>
        <strain>ATCC 33912 / PCC 7942 / FACHB-805</strain>
    </source>
</reference>
<organism>
    <name type="scientific">Synechococcus elongatus (strain ATCC 33912 / PCC 7942 / FACHB-805)</name>
    <name type="common">Anacystis nidulans R2</name>
    <dbReference type="NCBI Taxonomy" id="1140"/>
    <lineage>
        <taxon>Bacteria</taxon>
        <taxon>Bacillati</taxon>
        <taxon>Cyanobacteriota</taxon>
        <taxon>Cyanophyceae</taxon>
        <taxon>Synechococcales</taxon>
        <taxon>Synechococcaceae</taxon>
        <taxon>Synechococcus</taxon>
    </lineage>
</organism>
<feature type="chain" id="PRO_1000025961" description="Photosystem II reaction center protein M">
    <location>
        <begin position="1"/>
        <end position="35"/>
    </location>
</feature>
<feature type="transmembrane region" description="Helical" evidence="1">
    <location>
        <begin position="7"/>
        <end position="27"/>
    </location>
</feature>
<keyword id="KW-0472">Membrane</keyword>
<keyword id="KW-0602">Photosynthesis</keyword>
<keyword id="KW-0604">Photosystem II</keyword>
<keyword id="KW-0674">Reaction center</keyword>
<keyword id="KW-1185">Reference proteome</keyword>
<keyword id="KW-0793">Thylakoid</keyword>
<keyword id="KW-0812">Transmembrane</keyword>
<keyword id="KW-1133">Transmembrane helix</keyword>
<name>PSBM_SYNE7</name>